<organism>
    <name type="scientific">Nicotiana tabacum</name>
    <name type="common">Common tobacco</name>
    <dbReference type="NCBI Taxonomy" id="4097"/>
    <lineage>
        <taxon>Eukaryota</taxon>
        <taxon>Viridiplantae</taxon>
        <taxon>Streptophyta</taxon>
        <taxon>Embryophyta</taxon>
        <taxon>Tracheophyta</taxon>
        <taxon>Spermatophyta</taxon>
        <taxon>Magnoliopsida</taxon>
        <taxon>eudicotyledons</taxon>
        <taxon>Gunneridae</taxon>
        <taxon>Pentapetalae</taxon>
        <taxon>asterids</taxon>
        <taxon>lamiids</taxon>
        <taxon>Solanales</taxon>
        <taxon>Solanaceae</taxon>
        <taxon>Nicotianoideae</taxon>
        <taxon>Nicotianeae</taxon>
        <taxon>Nicotiana</taxon>
    </lineage>
</organism>
<reference key="1">
    <citation type="journal article" date="1997" name="Proc. Natl. Acad. Sci. U.S.A.">
        <title>Cloning and characterization of a plastidal and a mitochondrial isoform of tobacco protoporphyrinogen IX oxidase.</title>
        <authorList>
            <person name="Lermontova I."/>
            <person name="Kruse E."/>
            <person name="Mock H.-P."/>
            <person name="Grimm B."/>
        </authorList>
    </citation>
    <scope>NUCLEOTIDE SEQUENCE [MRNA]</scope>
    <scope>FUNCTION</scope>
    <scope>DEVELOPMENTAL STAGE</scope>
    <scope>INDUCTION</scope>
    <scope>SUBCELLULAR LOCATION</scope>
    <source>
        <strain>cv. SR1</strain>
    </source>
</reference>
<comment type="function">
    <text evidence="4">Catalyzes the 6-electron oxidation of protoporphyrinogen-IX to form protoporphyrin-IX.</text>
</comment>
<comment type="catalytic activity">
    <reaction>
        <text>protoporphyrinogen IX + 3 O2 = protoporphyrin IX + 3 H2O2</text>
        <dbReference type="Rhea" id="RHEA:25576"/>
        <dbReference type="ChEBI" id="CHEBI:15379"/>
        <dbReference type="ChEBI" id="CHEBI:16240"/>
        <dbReference type="ChEBI" id="CHEBI:57306"/>
        <dbReference type="ChEBI" id="CHEBI:57307"/>
        <dbReference type="EC" id="1.3.3.4"/>
    </reaction>
</comment>
<comment type="cofactor">
    <cofactor evidence="1">
        <name>FAD</name>
        <dbReference type="ChEBI" id="CHEBI:57692"/>
    </cofactor>
    <text evidence="1">Binds 1 FAD per subunit.</text>
</comment>
<comment type="pathway">
    <text>Porphyrin-containing compound metabolism; protoporphyrin-IX biosynthesis; protoporphyrin-IX from protoporphyrinogen-IX: step 1/1.</text>
</comment>
<comment type="pathway">
    <text>Porphyrin-containing compound metabolism; chlorophyll biosynthesis.</text>
</comment>
<comment type="subunit">
    <text evidence="1">Homodimer.</text>
</comment>
<comment type="subcellular location">
    <subcellularLocation>
        <location evidence="4">Plastid</location>
        <location evidence="4">Chloroplast</location>
    </subcellularLocation>
</comment>
<comment type="developmental stage">
    <text evidence="4">Expressed in expanding premature leaves. Decreased expression in oldest leaves. Expressed at very low level in roots.</text>
</comment>
<comment type="induction">
    <text evidence="4">Oscillating expression during diurnal growth. Maximal expression in the dark period.</text>
</comment>
<comment type="similarity">
    <text evidence="5">Belongs to the protoporphyrinogen/coproporphyrinogen oxidase family. Protoporphyrinogen oxidase subfamily.</text>
</comment>
<feature type="transit peptide" description="Chloroplast" evidence="2">
    <location>
        <begin position="1"/>
        <end position="50"/>
    </location>
</feature>
<feature type="chain" id="PRO_0000013326" description="Protoporphyrinogen oxidase, chloroplastic">
    <location>
        <begin position="51"/>
        <end position="548"/>
    </location>
</feature>
<feature type="region of interest" description="Disordered" evidence="3">
    <location>
        <begin position="265"/>
        <end position="287"/>
    </location>
</feature>
<feature type="compositionally biased region" description="Basic and acidic residues" evidence="3">
    <location>
        <begin position="265"/>
        <end position="279"/>
    </location>
</feature>
<feature type="binding site" evidence="1">
    <location>
        <begin position="78"/>
        <end position="83"/>
    </location>
    <ligand>
        <name>FAD</name>
        <dbReference type="ChEBI" id="CHEBI:57692"/>
    </ligand>
</feature>
<feature type="binding site" evidence="1">
    <location>
        <begin position="101"/>
        <end position="102"/>
    </location>
    <ligand>
        <name>FAD</name>
        <dbReference type="ChEBI" id="CHEBI:57692"/>
    </ligand>
</feature>
<feature type="binding site" evidence="1">
    <location>
        <begin position="123"/>
        <end position="126"/>
    </location>
    <ligand>
        <name>FAD</name>
        <dbReference type="ChEBI" id="CHEBI:57692"/>
    </ligand>
</feature>
<feature type="binding site" evidence="1">
    <location>
        <begin position="522"/>
        <end position="524"/>
    </location>
    <ligand>
        <name>FAD</name>
        <dbReference type="ChEBI" id="CHEBI:57692"/>
    </ligand>
</feature>
<sequence>MTTTPIANHPNIFTHQSSSSPLAFLNRTSFIPFSSISKRNSVNCNGWRTRCSVAKDYTVPSSAVDGGPAAELDCVIVGAGISGLCIAQVMSANYPNLMVTEARDRAGGNITTVERDGYLWEEGPNSFQPSDPMLTMAVDCGLKDDLVLGDPNAPRFVLWKGKLRPVPSKLTDLAFFDLMSIPGKLRAGFGAIGLRPSPPGHEESVEQFVRRNLGGEVFERLIEPFCSGVYAGDPSKLSMKAAFGKVWKLEETGGSIIGGTFKAIKERSSTPKAPRDPRLPKPKGQTVGSFRKGLRMLPDAISARLGSKLKLSWKLSSITKSEKGGYHLTYETPEGVVSLQSRSIVMTVPSYVASNILRPLSVAAADALSNFYYPPVGAVTITYPQEAIRDERLVDGELKGFGQLHPRTQGVETLGTIYSSSLFPNRAPKGRVLLLNYIGGAKNPEILSKTESQLVEVVDRDLRKMLIKPKAQDPLVVGVRVWPQAIPQFLVGHLDTLSTAKAAMNDNGLEGLFLGGNYVSGVALGRCVEGAYEVASEVTGFLSRYAYK</sequence>
<evidence type="ECO:0000250" key="1"/>
<evidence type="ECO:0000255" key="2"/>
<evidence type="ECO:0000256" key="3">
    <source>
        <dbReference type="SAM" id="MobiDB-lite"/>
    </source>
</evidence>
<evidence type="ECO:0000269" key="4">
    <source>
    </source>
</evidence>
<evidence type="ECO:0000305" key="5"/>
<accession>O24163</accession>
<name>PPOC_TOBAC</name>
<proteinExistence type="evidence at transcript level"/>
<protein>
    <recommendedName>
        <fullName>Protoporphyrinogen oxidase, chloroplastic</fullName>
        <shortName>PPO</shortName>
        <ecNumber>1.3.3.4</ecNumber>
    </recommendedName>
    <alternativeName>
        <fullName>Protoporphyrinogen IX oxidase isozyme I</fullName>
        <shortName>PPO I</shortName>
        <shortName>PPX I</shortName>
    </alternativeName>
</protein>
<keyword id="KW-0149">Chlorophyll biosynthesis</keyword>
<keyword id="KW-0150">Chloroplast</keyword>
<keyword id="KW-0274">FAD</keyword>
<keyword id="KW-0285">Flavoprotein</keyword>
<keyword id="KW-0350">Heme biosynthesis</keyword>
<keyword id="KW-0560">Oxidoreductase</keyword>
<keyword id="KW-0934">Plastid</keyword>
<keyword id="KW-0627">Porphyrin biosynthesis</keyword>
<keyword id="KW-1185">Reference proteome</keyword>
<keyword id="KW-0809">Transit peptide</keyword>
<dbReference type="EC" id="1.3.3.4"/>
<dbReference type="EMBL" id="Y13465">
    <property type="protein sequence ID" value="CAA73865.1"/>
    <property type="molecule type" value="mRNA"/>
</dbReference>
<dbReference type="PIR" id="T04058">
    <property type="entry name" value="T04058"/>
</dbReference>
<dbReference type="SMR" id="O24163"/>
<dbReference type="STRING" id="4097.O24163"/>
<dbReference type="BindingDB" id="O24163"/>
<dbReference type="ChEMBL" id="CHEMBL2366455"/>
<dbReference type="PaxDb" id="4097-O24163"/>
<dbReference type="BioCyc" id="MetaCyc:MONOMER-11760"/>
<dbReference type="BRENDA" id="1.3.3.4">
    <property type="organism ID" value="3645"/>
</dbReference>
<dbReference type="UniPathway" id="UPA00251">
    <property type="reaction ID" value="UER00324"/>
</dbReference>
<dbReference type="UniPathway" id="UPA00668"/>
<dbReference type="Proteomes" id="UP000084051">
    <property type="component" value="Unplaced"/>
</dbReference>
<dbReference type="GO" id="GO:0009507">
    <property type="term" value="C:chloroplast"/>
    <property type="evidence" value="ECO:0007669"/>
    <property type="project" value="UniProtKB-SubCell"/>
</dbReference>
<dbReference type="GO" id="GO:0004729">
    <property type="term" value="F:oxygen-dependent protoporphyrinogen oxidase activity"/>
    <property type="evidence" value="ECO:0000318"/>
    <property type="project" value="GO_Central"/>
</dbReference>
<dbReference type="GO" id="GO:0015995">
    <property type="term" value="P:chlorophyll biosynthetic process"/>
    <property type="evidence" value="ECO:0007669"/>
    <property type="project" value="UniProtKB-UniPathway"/>
</dbReference>
<dbReference type="GO" id="GO:0006782">
    <property type="term" value="P:protoporphyrinogen IX biosynthetic process"/>
    <property type="evidence" value="ECO:0007669"/>
    <property type="project" value="UniProtKB-UniPathway"/>
</dbReference>
<dbReference type="FunFam" id="1.10.3110.10:FF:000002">
    <property type="entry name" value="Protoporphyrinogen oxidase"/>
    <property type="match status" value="1"/>
</dbReference>
<dbReference type="Gene3D" id="3.50.50.60">
    <property type="entry name" value="FAD/NAD(P)-binding domain"/>
    <property type="match status" value="1"/>
</dbReference>
<dbReference type="Gene3D" id="1.10.3110.10">
    <property type="entry name" value="protoporphyrinogen ix oxidase, domain 3"/>
    <property type="match status" value="1"/>
</dbReference>
<dbReference type="Gene3D" id="3.90.660.20">
    <property type="entry name" value="Protoporphyrinogen oxidase, mitochondrial, domain 2"/>
    <property type="match status" value="1"/>
</dbReference>
<dbReference type="InterPro" id="IPR002937">
    <property type="entry name" value="Amino_oxidase"/>
</dbReference>
<dbReference type="InterPro" id="IPR036188">
    <property type="entry name" value="FAD/NAD-bd_sf"/>
</dbReference>
<dbReference type="InterPro" id="IPR004572">
    <property type="entry name" value="Protoporphyrinogen_oxidase"/>
</dbReference>
<dbReference type="InterPro" id="IPR050464">
    <property type="entry name" value="Zeta_carotene_desat/Oxidored"/>
</dbReference>
<dbReference type="NCBIfam" id="TIGR00562">
    <property type="entry name" value="proto_IX_ox"/>
    <property type="match status" value="1"/>
</dbReference>
<dbReference type="PANTHER" id="PTHR42923">
    <property type="entry name" value="PROTOPORPHYRINOGEN OXIDASE"/>
    <property type="match status" value="1"/>
</dbReference>
<dbReference type="PANTHER" id="PTHR42923:SF3">
    <property type="entry name" value="PROTOPORPHYRINOGEN OXIDASE"/>
    <property type="match status" value="1"/>
</dbReference>
<dbReference type="Pfam" id="PF01593">
    <property type="entry name" value="Amino_oxidase"/>
    <property type="match status" value="1"/>
</dbReference>
<dbReference type="SUPFAM" id="SSF54373">
    <property type="entry name" value="FAD-linked reductases, C-terminal domain"/>
    <property type="match status" value="1"/>
</dbReference>
<dbReference type="SUPFAM" id="SSF51905">
    <property type="entry name" value="FAD/NAD(P)-binding domain"/>
    <property type="match status" value="1"/>
</dbReference>
<gene>
    <name type="primary">PPXI</name>
</gene>